<protein>
    <recommendedName>
        <fullName>Formate acetyltransferase</fullName>
        <ecNumber>2.3.1.54</ecNumber>
    </recommendedName>
    <alternativeName>
        <fullName>Pyruvate formate-lyase</fullName>
    </alternativeName>
</protein>
<sequence>MKTEVTENIFEQAWDGFKGTNWRDKASVTRFVQENYKPYDGDESFLAGPTERTLKVKKIIEDTKNHYEEVGFPFDTDRVTSIDKIPAGYIDANDKELELIYGMQNSELFRLNFMPRGGLRVAEKILTEHGLSVDPGLHDVLSQTMTSVNDGIFRAYTSAIRKARHAHTVTGLPDAYSRGRIIGVYARLALYGADYLMKEKAKEWDAITEINDDNIRLKEEINMQYQALQEVVNFGALYGLDVSRPAMNVKEAIQWVNIAYMAVCRVINGAATSLGRVPIVLDIFAERDLARGTFTEQEIQEFVDDFILKLRTMKFARAAAYDELYSGDPTFITTSMAGMGNDGRHRVTKMDYRFLNTLDTIGNAPEPNLTVLWDSKLPYSFKRYSMSMSHKHSSIQYEGVETMAKDGYGEMSCISCCVSPLDPENEEGRHNLQYFGARVNVLKAMLTGLNGGYDDVHKDYKVFDIEPVRDEILDYDTVMENFDKSLNWLTDTYVDAMNIIHYMTDKYNYEAVQMAFLPTKVRANMGFGICGFANTVDSLSAIKYAKVKTLRDENGYIYDYEVEGDFPRYGEDDDRADDIAKLVMKMYHEKLASHKLYKNAEATVSLLTITSNVAYSKQTGNSPVHKGVFLNEDGTVNKSKLEFFSPGANPSNKAKGGWLQNLRSLAKLEFKDANDGISLTTQVSPRALGKTRDEQVDNLVQILDGYFTPGALINGTEFAGQHVNLNVMDLKDVYDKIMRGEDVIVRISGYCVNTKYLTPEQKQELTERVFHEVLSNDDEEVMHTSNI</sequence>
<feature type="chain" id="PRO_0000166694" description="Formate acetyltransferase">
    <location>
        <begin position="1"/>
        <end position="787"/>
    </location>
</feature>
<feature type="domain" description="PFL" evidence="3">
    <location>
        <begin position="8"/>
        <end position="629"/>
    </location>
</feature>
<feature type="domain" description="Glycine radical" evidence="2">
    <location>
        <begin position="645"/>
        <end position="774"/>
    </location>
</feature>
<feature type="active site" description="S-acetylcysteine intermediate" evidence="1">
    <location>
        <position position="416"/>
    </location>
</feature>
<feature type="active site" description="Cysteine radical intermediate" evidence="1">
    <location>
        <position position="417"/>
    </location>
</feature>
<feature type="modified residue" description="Glycine radical" evidence="2">
    <location>
        <position position="749"/>
    </location>
</feature>
<organism>
    <name type="scientific">Lactococcus lactis subsp. cremoris (strain MG1363)</name>
    <dbReference type="NCBI Taxonomy" id="416870"/>
    <lineage>
        <taxon>Bacteria</taxon>
        <taxon>Bacillati</taxon>
        <taxon>Bacillota</taxon>
        <taxon>Bacilli</taxon>
        <taxon>Lactobacillales</taxon>
        <taxon>Streptococcaceae</taxon>
        <taxon>Lactococcus</taxon>
        <taxon>Lactococcus cremoris subsp. cremoris</taxon>
    </lineage>
</organism>
<name>PFL_LACLM</name>
<dbReference type="EC" id="2.3.1.54"/>
<dbReference type="EMBL" id="AJ000325">
    <property type="protein sequence ID" value="CAA03991.1"/>
    <property type="molecule type" value="Genomic_DNA"/>
</dbReference>
<dbReference type="EMBL" id="AM406671">
    <property type="protein sequence ID" value="CAL97231.1"/>
    <property type="molecule type" value="Genomic_DNA"/>
</dbReference>
<dbReference type="RefSeq" id="WP_011834639.1">
    <property type="nucleotide sequence ID" value="NC_009004.1"/>
</dbReference>
<dbReference type="SMR" id="O32799"/>
<dbReference type="STRING" id="416870.llmg_0629"/>
<dbReference type="KEGG" id="llm:llmg_0629"/>
<dbReference type="eggNOG" id="COG1882">
    <property type="taxonomic scope" value="Bacteria"/>
</dbReference>
<dbReference type="HOGENOM" id="CLU_023898_0_0_9"/>
<dbReference type="OrthoDB" id="9803969at2"/>
<dbReference type="PhylomeDB" id="O32799"/>
<dbReference type="UniPathway" id="UPA00920">
    <property type="reaction ID" value="UER00891"/>
</dbReference>
<dbReference type="Proteomes" id="UP000000364">
    <property type="component" value="Chromosome"/>
</dbReference>
<dbReference type="GO" id="GO:0005829">
    <property type="term" value="C:cytosol"/>
    <property type="evidence" value="ECO:0007669"/>
    <property type="project" value="TreeGrafter"/>
</dbReference>
<dbReference type="GO" id="GO:0008861">
    <property type="term" value="F:formate C-acetyltransferase activity"/>
    <property type="evidence" value="ECO:0007669"/>
    <property type="project" value="UniProtKB-EC"/>
</dbReference>
<dbReference type="GO" id="GO:0006006">
    <property type="term" value="P:glucose metabolic process"/>
    <property type="evidence" value="ECO:0007669"/>
    <property type="project" value="UniProtKB-KW"/>
</dbReference>
<dbReference type="CDD" id="cd01678">
    <property type="entry name" value="PFL1"/>
    <property type="match status" value="1"/>
</dbReference>
<dbReference type="FunFam" id="3.20.70.20:FF:000011">
    <property type="entry name" value="Formate acetyltransferase"/>
    <property type="match status" value="1"/>
</dbReference>
<dbReference type="Gene3D" id="3.20.70.20">
    <property type="match status" value="1"/>
</dbReference>
<dbReference type="InterPro" id="IPR050244">
    <property type="entry name" value="Auton_GlycylRad_Cofactor"/>
</dbReference>
<dbReference type="InterPro" id="IPR005949">
    <property type="entry name" value="Form_AcTrfase"/>
</dbReference>
<dbReference type="InterPro" id="IPR019777">
    <property type="entry name" value="Form_AcTrfase_GR_CS"/>
</dbReference>
<dbReference type="InterPro" id="IPR001150">
    <property type="entry name" value="Gly_radical"/>
</dbReference>
<dbReference type="InterPro" id="IPR004184">
    <property type="entry name" value="PFL_dom"/>
</dbReference>
<dbReference type="NCBIfam" id="TIGR01255">
    <property type="entry name" value="pyr_form_ly_1"/>
    <property type="match status" value="1"/>
</dbReference>
<dbReference type="PANTHER" id="PTHR30191">
    <property type="entry name" value="FORMATE ACETYLTRANSFERASE"/>
    <property type="match status" value="1"/>
</dbReference>
<dbReference type="PANTHER" id="PTHR30191:SF8">
    <property type="entry name" value="FORMATE ACETYLTRANSFERASE"/>
    <property type="match status" value="1"/>
</dbReference>
<dbReference type="Pfam" id="PF01228">
    <property type="entry name" value="Gly_radical"/>
    <property type="match status" value="1"/>
</dbReference>
<dbReference type="Pfam" id="PF02901">
    <property type="entry name" value="PFL-like"/>
    <property type="match status" value="1"/>
</dbReference>
<dbReference type="PIRSF" id="PIRSF000379">
    <property type="entry name" value="For_Ac_trans_1"/>
    <property type="match status" value="1"/>
</dbReference>
<dbReference type="SUPFAM" id="SSF51998">
    <property type="entry name" value="PFL-like glycyl radical enzymes"/>
    <property type="match status" value="1"/>
</dbReference>
<dbReference type="PROSITE" id="PS00850">
    <property type="entry name" value="GLY_RADICAL_1"/>
    <property type="match status" value="1"/>
</dbReference>
<dbReference type="PROSITE" id="PS51149">
    <property type="entry name" value="GLY_RADICAL_2"/>
    <property type="match status" value="1"/>
</dbReference>
<dbReference type="PROSITE" id="PS51554">
    <property type="entry name" value="PFL"/>
    <property type="match status" value="1"/>
</dbReference>
<gene>
    <name type="primary">pfl</name>
    <name type="ordered locus">llmg_0629</name>
</gene>
<reference key="1">
    <citation type="journal article" date="1997" name="J. Bacteriol.">
        <title>Cloning, expression, and characterization of the Lactococcus lactis pfl gene, encoding pyruvate formate-lyase.</title>
        <authorList>
            <person name="Arnau J."/>
            <person name="Joergensen F."/>
            <person name="Madsen S.M."/>
            <person name="Vrang A."/>
            <person name="Israelsen H."/>
        </authorList>
    </citation>
    <scope>NUCLEOTIDE SEQUENCE [GENOMIC DNA]</scope>
</reference>
<reference key="2">
    <citation type="journal article" date="2007" name="J. Bacteriol.">
        <title>The complete genome sequence of the lactic acid bacterial paradigm Lactococcus lactis subsp. cremoris MG1363.</title>
        <authorList>
            <person name="Wegmann U."/>
            <person name="O'Connell-Motherway M."/>
            <person name="Zomer A."/>
            <person name="Buist G."/>
            <person name="Shearman C."/>
            <person name="Canchaya C."/>
            <person name="Ventura M."/>
            <person name="Goesmann A."/>
            <person name="Gasson M.J."/>
            <person name="Kuipers O.P."/>
            <person name="van Sinderen D."/>
            <person name="Kok J."/>
        </authorList>
    </citation>
    <scope>NUCLEOTIDE SEQUENCE [LARGE SCALE GENOMIC DNA]</scope>
    <source>
        <strain>MG1363</strain>
    </source>
</reference>
<accession>O32799</accession>
<accession>A2RIY3</accession>
<keyword id="KW-0012">Acyltransferase</keyword>
<keyword id="KW-0119">Carbohydrate metabolism</keyword>
<keyword id="KW-0963">Cytoplasm</keyword>
<keyword id="KW-0313">Glucose metabolism</keyword>
<keyword id="KW-0556">Organic radical</keyword>
<keyword id="KW-0808">Transferase</keyword>
<comment type="catalytic activity">
    <reaction>
        <text>formate + acetyl-CoA = pyruvate + CoA</text>
        <dbReference type="Rhea" id="RHEA:11844"/>
        <dbReference type="ChEBI" id="CHEBI:15361"/>
        <dbReference type="ChEBI" id="CHEBI:15740"/>
        <dbReference type="ChEBI" id="CHEBI:57287"/>
        <dbReference type="ChEBI" id="CHEBI:57288"/>
        <dbReference type="EC" id="2.3.1.54"/>
    </reaction>
</comment>
<comment type="pathway">
    <text>Fermentation; pyruvate fermentation; formate from pyruvate: step 1/1.</text>
</comment>
<comment type="subunit">
    <text evidence="1">Homodimer.</text>
</comment>
<comment type="subcellular location">
    <subcellularLocation>
        <location evidence="1">Cytoplasm</location>
    </subcellularLocation>
</comment>
<comment type="miscellaneous">
    <text evidence="1">Several mechanisms have been proposed based on complexes formed with substrate analogs. After activation by the glycine radical, the cysteine radical, Cys-417, can abstract hydrogen atoms from the other active site cysteine, Cys-416, and from coenzyme A, and it can also transfer hydrogen atoms to product radicals. The other active site cysteine can attack the central carbonyl of pyruvate and covalently bind the product acetyl group (By similarity).</text>
</comment>
<comment type="similarity">
    <text evidence="4">Belongs to the glycyl radical enzyme (GRE) family. PFL subfamily.</text>
</comment>
<proteinExistence type="inferred from homology"/>
<evidence type="ECO:0000250" key="1"/>
<evidence type="ECO:0000255" key="2">
    <source>
        <dbReference type="PROSITE-ProRule" id="PRU00493"/>
    </source>
</evidence>
<evidence type="ECO:0000255" key="3">
    <source>
        <dbReference type="PROSITE-ProRule" id="PRU00887"/>
    </source>
</evidence>
<evidence type="ECO:0000305" key="4"/>